<organism>
    <name type="scientific">Pyrobaculum arsenaticum (strain DSM 13514 / JCM 11321 / PZ6)</name>
    <dbReference type="NCBI Taxonomy" id="340102"/>
    <lineage>
        <taxon>Archaea</taxon>
        <taxon>Thermoproteota</taxon>
        <taxon>Thermoprotei</taxon>
        <taxon>Thermoproteales</taxon>
        <taxon>Thermoproteaceae</taxon>
        <taxon>Pyrobaculum</taxon>
    </lineage>
</organism>
<accession>A4WJ34</accession>
<gene>
    <name type="primary">ribK</name>
    <name type="ordered locus">Pars_0815</name>
</gene>
<name>RIFK_PYRAR</name>
<protein>
    <recommendedName>
        <fullName>Riboflavin kinase</fullName>
        <shortName>RFK</shortName>
        <ecNumber>2.7.1.161</ecNumber>
    </recommendedName>
    <alternativeName>
        <fullName>CTP-dependent riboflavin kinase</fullName>
    </alternativeName>
    <alternativeName>
        <fullName>CTP:riboflavin 5'-phosphotransferase</fullName>
    </alternativeName>
    <alternativeName>
        <fullName>Flavokinase</fullName>
    </alternativeName>
</protein>
<keyword id="KW-0285">Flavoprotein</keyword>
<keyword id="KW-0288">FMN</keyword>
<keyword id="KW-0418">Kinase</keyword>
<keyword id="KW-0460">Magnesium</keyword>
<keyword id="KW-0479">Metal-binding</keyword>
<keyword id="KW-0547">Nucleotide-binding</keyword>
<keyword id="KW-0808">Transferase</keyword>
<proteinExistence type="inferred from homology"/>
<dbReference type="EC" id="2.7.1.161"/>
<dbReference type="EMBL" id="CP000660">
    <property type="protein sequence ID" value="ABP50401.1"/>
    <property type="molecule type" value="Genomic_DNA"/>
</dbReference>
<dbReference type="SMR" id="A4WJ34"/>
<dbReference type="STRING" id="340102.Pars_0815"/>
<dbReference type="KEGG" id="pas:Pars_0815"/>
<dbReference type="HOGENOM" id="CLU_088476_0_0_2"/>
<dbReference type="OrthoDB" id="30955at2157"/>
<dbReference type="PhylomeDB" id="A4WJ34"/>
<dbReference type="UniPathway" id="UPA00276">
    <property type="reaction ID" value="UER00929"/>
</dbReference>
<dbReference type="Proteomes" id="UP000001567">
    <property type="component" value="Chromosome"/>
</dbReference>
<dbReference type="GO" id="GO:0000287">
    <property type="term" value="F:magnesium ion binding"/>
    <property type="evidence" value="ECO:0007669"/>
    <property type="project" value="UniProtKB-UniRule"/>
</dbReference>
<dbReference type="GO" id="GO:0000166">
    <property type="term" value="F:nucleotide binding"/>
    <property type="evidence" value="ECO:0007669"/>
    <property type="project" value="UniProtKB-UniRule"/>
</dbReference>
<dbReference type="GO" id="GO:0008531">
    <property type="term" value="F:riboflavin kinase activity"/>
    <property type="evidence" value="ECO:0007669"/>
    <property type="project" value="InterPro"/>
</dbReference>
<dbReference type="GO" id="GO:0009398">
    <property type="term" value="P:FMN biosynthetic process"/>
    <property type="evidence" value="ECO:0007669"/>
    <property type="project" value="UniProtKB-UniRule"/>
</dbReference>
<dbReference type="GO" id="GO:0009231">
    <property type="term" value="P:riboflavin biosynthetic process"/>
    <property type="evidence" value="ECO:0007669"/>
    <property type="project" value="InterPro"/>
</dbReference>
<dbReference type="Gene3D" id="2.40.30.30">
    <property type="entry name" value="Riboflavin kinase-like"/>
    <property type="match status" value="1"/>
</dbReference>
<dbReference type="Gene3D" id="1.10.10.10">
    <property type="entry name" value="Winged helix-like DNA-binding domain superfamily/Winged helix DNA-binding domain"/>
    <property type="match status" value="1"/>
</dbReference>
<dbReference type="HAMAP" id="MF_01285">
    <property type="entry name" value="Riboflavin_kinase"/>
    <property type="match status" value="1"/>
</dbReference>
<dbReference type="InterPro" id="IPR039063">
    <property type="entry name" value="RibK_CTP-dep"/>
</dbReference>
<dbReference type="InterPro" id="IPR023470">
    <property type="entry name" value="Riboflavin_kinase_archaeal"/>
</dbReference>
<dbReference type="InterPro" id="IPR023602">
    <property type="entry name" value="Riboflavin_kinase_CTP-dep"/>
</dbReference>
<dbReference type="InterPro" id="IPR023465">
    <property type="entry name" value="Riboflavin_kinase_dom_sf"/>
</dbReference>
<dbReference type="InterPro" id="IPR036388">
    <property type="entry name" value="WH-like_DNA-bd_sf"/>
</dbReference>
<dbReference type="InterPro" id="IPR036390">
    <property type="entry name" value="WH_DNA-bd_sf"/>
</dbReference>
<dbReference type="PANTHER" id="PTHR40706">
    <property type="entry name" value="RIBOFLAVIN KINASE"/>
    <property type="match status" value="1"/>
</dbReference>
<dbReference type="PANTHER" id="PTHR40706:SF1">
    <property type="entry name" value="RIBOFLAVIN KINASE"/>
    <property type="match status" value="1"/>
</dbReference>
<dbReference type="Pfam" id="PF01982">
    <property type="entry name" value="CTP-dep_RFKase"/>
    <property type="match status" value="1"/>
</dbReference>
<dbReference type="SUPFAM" id="SSF82114">
    <property type="entry name" value="Riboflavin kinase-like"/>
    <property type="match status" value="1"/>
</dbReference>
<dbReference type="SUPFAM" id="SSF46785">
    <property type="entry name" value="Winged helix' DNA-binding domain"/>
    <property type="match status" value="1"/>
</dbReference>
<evidence type="ECO:0000250" key="1"/>
<evidence type="ECO:0000305" key="2"/>
<reference key="1">
    <citation type="submission" date="2007-04" db="EMBL/GenBank/DDBJ databases">
        <title>Complete sequence of Pyrobaculum arsenaticum DSM 13514.</title>
        <authorList>
            <consortium name="US DOE Joint Genome Institute"/>
            <person name="Copeland A."/>
            <person name="Lucas S."/>
            <person name="Lapidus A."/>
            <person name="Barry K."/>
            <person name="Glavina del Rio T."/>
            <person name="Dalin E."/>
            <person name="Tice H."/>
            <person name="Pitluck S."/>
            <person name="Chain P."/>
            <person name="Malfatti S."/>
            <person name="Shin M."/>
            <person name="Vergez L."/>
            <person name="Schmutz J."/>
            <person name="Larimer F."/>
            <person name="Land M."/>
            <person name="Hauser L."/>
            <person name="Kyrpides N."/>
            <person name="Mikhailova N."/>
            <person name="Cozen A.E."/>
            <person name="Fitz-Gibbon S.T."/>
            <person name="House C.H."/>
            <person name="Saltikov C."/>
            <person name="Lowe T.M."/>
            <person name="Richardson P."/>
        </authorList>
    </citation>
    <scope>NUCLEOTIDE SEQUENCE [LARGE SCALE GENOMIC DNA]</scope>
    <source>
        <strain>ATCC 700994 / DSM 13514 / JCM 11321 / PZ6</strain>
    </source>
</reference>
<feature type="chain" id="PRO_0000322100" description="Riboflavin kinase">
    <location>
        <begin position="1"/>
        <end position="210"/>
    </location>
</feature>
<feature type="region of interest" description="H-T-H motif-like">
    <location>
        <begin position="1"/>
        <end position="81"/>
    </location>
</feature>
<feature type="region of interest" description="Riboflavin kinase">
    <location>
        <begin position="82"/>
        <end position="210"/>
    </location>
</feature>
<feature type="binding site" evidence="1">
    <location>
        <begin position="91"/>
        <end position="96"/>
    </location>
    <ligand>
        <name>CDP</name>
        <dbReference type="ChEBI" id="CHEBI:58069"/>
    </ligand>
</feature>
<feature type="binding site" evidence="1">
    <location>
        <position position="120"/>
    </location>
    <ligand>
        <name>Mg(2+)</name>
        <dbReference type="ChEBI" id="CHEBI:18420"/>
    </ligand>
</feature>
<feature type="binding site" evidence="1">
    <location>
        <position position="122"/>
    </location>
    <ligand>
        <name>Mg(2+)</name>
        <dbReference type="ChEBI" id="CHEBI:18420"/>
    </ligand>
</feature>
<feature type="binding site" evidence="1">
    <location>
        <position position="177"/>
    </location>
    <ligand>
        <name>FMN</name>
        <dbReference type="ChEBI" id="CHEBI:58210"/>
    </ligand>
</feature>
<feature type="binding site" evidence="1">
    <location>
        <position position="185"/>
    </location>
    <ligand>
        <name>FMN</name>
        <dbReference type="ChEBI" id="CHEBI:58210"/>
    </ligand>
</feature>
<feature type="binding site" evidence="1">
    <location>
        <begin position="190"/>
        <end position="193"/>
    </location>
    <ligand>
        <name>CDP</name>
        <dbReference type="ChEBI" id="CHEBI:58069"/>
    </ligand>
</feature>
<sequence length="210" mass="23188">MECRERRLAADLIALSSVEGLPVSEAAKRLCMTRQGLYKLLKQLRAEGYVAEGSVVKLTPKGRDFLSGILRDLLRYFNIASIRLVGRVVSGLGEGAFYISLEGYKRAIEERLGFTPFPGTLNIKLDPQYMPYRRYLDGLPGVVIPGFSNGLRTYGAVKAFRARVNGVEGAVVMPERTHHPTDVIEVVAPVKLRDALGLRDGDVVEVEVLL</sequence>
<comment type="function">
    <text evidence="1">Catalyzes the CTP-dependent phosphorylation of riboflavin (vitamin B2) to form flavin mononucleotide (FMN).</text>
</comment>
<comment type="catalytic activity">
    <reaction>
        <text>riboflavin + CTP = CDP + FMN + H(+)</text>
        <dbReference type="Rhea" id="RHEA:25021"/>
        <dbReference type="ChEBI" id="CHEBI:15378"/>
        <dbReference type="ChEBI" id="CHEBI:37563"/>
        <dbReference type="ChEBI" id="CHEBI:57986"/>
        <dbReference type="ChEBI" id="CHEBI:58069"/>
        <dbReference type="ChEBI" id="CHEBI:58210"/>
        <dbReference type="EC" id="2.7.1.161"/>
    </reaction>
</comment>
<comment type="cofactor">
    <cofactor evidence="1">
        <name>Mg(2+)</name>
        <dbReference type="ChEBI" id="CHEBI:18420"/>
    </cofactor>
    <text evidence="1">Binds 1 Mg(2+) ion per subunit.</text>
</comment>
<comment type="pathway">
    <text>Cofactor biosynthesis; FMN biosynthesis; FMN from riboflavin (CTP route): step 1/1.</text>
</comment>
<comment type="similarity">
    <text evidence="2">Belongs to the archaeal riboflavin kinase family.</text>
</comment>